<gene>
    <name evidence="1" type="primary">rplB</name>
    <name type="ordered locus">TP_0192</name>
</gene>
<organism>
    <name type="scientific">Treponema pallidum (strain Nichols)</name>
    <dbReference type="NCBI Taxonomy" id="243276"/>
    <lineage>
        <taxon>Bacteria</taxon>
        <taxon>Pseudomonadati</taxon>
        <taxon>Spirochaetota</taxon>
        <taxon>Spirochaetia</taxon>
        <taxon>Spirochaetales</taxon>
        <taxon>Treponemataceae</taxon>
        <taxon>Treponema</taxon>
    </lineage>
</organism>
<accession>O83222</accession>
<reference key="1">
    <citation type="journal article" date="1998" name="Science">
        <title>Complete genome sequence of Treponema pallidum, the syphilis spirochete.</title>
        <authorList>
            <person name="Fraser C.M."/>
            <person name="Norris S.J."/>
            <person name="Weinstock G.M."/>
            <person name="White O."/>
            <person name="Sutton G.G."/>
            <person name="Dodson R.J."/>
            <person name="Gwinn M.L."/>
            <person name="Hickey E.K."/>
            <person name="Clayton R.A."/>
            <person name="Ketchum K.A."/>
            <person name="Sodergren E."/>
            <person name="Hardham J.M."/>
            <person name="McLeod M.P."/>
            <person name="Salzberg S.L."/>
            <person name="Peterson J.D."/>
            <person name="Khalak H.G."/>
            <person name="Richardson D.L."/>
            <person name="Howell J.K."/>
            <person name="Chidambaram M."/>
            <person name="Utterback T.R."/>
            <person name="McDonald L.A."/>
            <person name="Artiach P."/>
            <person name="Bowman C."/>
            <person name="Cotton M.D."/>
            <person name="Fujii C."/>
            <person name="Garland S.A."/>
            <person name="Hatch B."/>
            <person name="Horst K."/>
            <person name="Roberts K.M."/>
            <person name="Sandusky M."/>
            <person name="Weidman J.F."/>
            <person name="Smith H.O."/>
            <person name="Venter J.C."/>
        </authorList>
    </citation>
    <scope>NUCLEOTIDE SEQUENCE [LARGE SCALE GENOMIC DNA]</scope>
    <source>
        <strain>Nichols</strain>
    </source>
</reference>
<sequence length="273" mass="29867">MALKMYRPMTAGLRGRVDLCRAELTARTPEKSLTRGKPAKAGRGAGGRISVRHRGGGHKRRYRDIDFKRDLHDIPGTVKTIEYDPNRSVNIALVFYANGQKRYILAPKGLKVGQQVVSGEKVPLEPANALPLGVIPVGFTVHNVELTIGKGGQIARSAGTRAVIAAKDGGYVMLRLPSGEARLVHRRCYATIGELGNEDHMNTALGKAGRARWRGVRPTVRGMAMNPVDHPLGGGEGRGKGRNPVTPWGQPCRGYKTRKKRRVSDRFIVSKRK</sequence>
<dbReference type="EMBL" id="AE000520">
    <property type="protein sequence ID" value="AAC65177.1"/>
    <property type="molecule type" value="Genomic_DNA"/>
</dbReference>
<dbReference type="PIR" id="B71355">
    <property type="entry name" value="B71355"/>
</dbReference>
<dbReference type="RefSeq" id="WP_010881639.1">
    <property type="nucleotide sequence ID" value="NC_021490.2"/>
</dbReference>
<dbReference type="SMR" id="O83222"/>
<dbReference type="IntAct" id="O83222">
    <property type="interactions" value="2"/>
</dbReference>
<dbReference type="STRING" id="243276.TP_0192"/>
<dbReference type="EnsemblBacteria" id="AAC65177">
    <property type="protein sequence ID" value="AAC65177"/>
    <property type="gene ID" value="TP_0192"/>
</dbReference>
<dbReference type="GeneID" id="93875980"/>
<dbReference type="KEGG" id="tpa:TP_0192"/>
<dbReference type="KEGG" id="tpw:TPANIC_0192"/>
<dbReference type="eggNOG" id="COG0090">
    <property type="taxonomic scope" value="Bacteria"/>
</dbReference>
<dbReference type="HOGENOM" id="CLU_036235_2_1_12"/>
<dbReference type="OrthoDB" id="9778722at2"/>
<dbReference type="Proteomes" id="UP000000811">
    <property type="component" value="Chromosome"/>
</dbReference>
<dbReference type="GO" id="GO:0015934">
    <property type="term" value="C:large ribosomal subunit"/>
    <property type="evidence" value="ECO:0007669"/>
    <property type="project" value="InterPro"/>
</dbReference>
<dbReference type="GO" id="GO:0019843">
    <property type="term" value="F:rRNA binding"/>
    <property type="evidence" value="ECO:0007669"/>
    <property type="project" value="UniProtKB-UniRule"/>
</dbReference>
<dbReference type="GO" id="GO:0003735">
    <property type="term" value="F:structural constituent of ribosome"/>
    <property type="evidence" value="ECO:0007669"/>
    <property type="project" value="InterPro"/>
</dbReference>
<dbReference type="GO" id="GO:0016740">
    <property type="term" value="F:transferase activity"/>
    <property type="evidence" value="ECO:0007669"/>
    <property type="project" value="InterPro"/>
</dbReference>
<dbReference type="GO" id="GO:0002181">
    <property type="term" value="P:cytoplasmic translation"/>
    <property type="evidence" value="ECO:0007669"/>
    <property type="project" value="TreeGrafter"/>
</dbReference>
<dbReference type="FunFam" id="2.30.30.30:FF:000001">
    <property type="entry name" value="50S ribosomal protein L2"/>
    <property type="match status" value="1"/>
</dbReference>
<dbReference type="FunFam" id="4.10.950.10:FF:000001">
    <property type="entry name" value="50S ribosomal protein L2"/>
    <property type="match status" value="1"/>
</dbReference>
<dbReference type="Gene3D" id="2.30.30.30">
    <property type="match status" value="1"/>
</dbReference>
<dbReference type="Gene3D" id="2.40.50.140">
    <property type="entry name" value="Nucleic acid-binding proteins"/>
    <property type="match status" value="1"/>
</dbReference>
<dbReference type="Gene3D" id="4.10.950.10">
    <property type="entry name" value="Ribosomal protein L2, domain 3"/>
    <property type="match status" value="1"/>
</dbReference>
<dbReference type="HAMAP" id="MF_01320_B">
    <property type="entry name" value="Ribosomal_uL2_B"/>
    <property type="match status" value="1"/>
</dbReference>
<dbReference type="InterPro" id="IPR012340">
    <property type="entry name" value="NA-bd_OB-fold"/>
</dbReference>
<dbReference type="InterPro" id="IPR014722">
    <property type="entry name" value="Rib_uL2_dom2"/>
</dbReference>
<dbReference type="InterPro" id="IPR002171">
    <property type="entry name" value="Ribosomal_uL2"/>
</dbReference>
<dbReference type="InterPro" id="IPR005880">
    <property type="entry name" value="Ribosomal_uL2_bac/org-type"/>
</dbReference>
<dbReference type="InterPro" id="IPR022669">
    <property type="entry name" value="Ribosomal_uL2_C"/>
</dbReference>
<dbReference type="InterPro" id="IPR014726">
    <property type="entry name" value="Ribosomal_uL2_dom3"/>
</dbReference>
<dbReference type="InterPro" id="IPR022666">
    <property type="entry name" value="Ribosomal_uL2_RNA-bd_dom"/>
</dbReference>
<dbReference type="InterPro" id="IPR008991">
    <property type="entry name" value="Translation_prot_SH3-like_sf"/>
</dbReference>
<dbReference type="NCBIfam" id="TIGR01171">
    <property type="entry name" value="rplB_bact"/>
    <property type="match status" value="1"/>
</dbReference>
<dbReference type="PANTHER" id="PTHR13691:SF5">
    <property type="entry name" value="LARGE RIBOSOMAL SUBUNIT PROTEIN UL2M"/>
    <property type="match status" value="1"/>
</dbReference>
<dbReference type="PANTHER" id="PTHR13691">
    <property type="entry name" value="RIBOSOMAL PROTEIN L2"/>
    <property type="match status" value="1"/>
</dbReference>
<dbReference type="Pfam" id="PF00181">
    <property type="entry name" value="Ribosomal_L2"/>
    <property type="match status" value="1"/>
</dbReference>
<dbReference type="Pfam" id="PF03947">
    <property type="entry name" value="Ribosomal_L2_C"/>
    <property type="match status" value="1"/>
</dbReference>
<dbReference type="PIRSF" id="PIRSF002158">
    <property type="entry name" value="Ribosomal_L2"/>
    <property type="match status" value="1"/>
</dbReference>
<dbReference type="SMART" id="SM01383">
    <property type="entry name" value="Ribosomal_L2"/>
    <property type="match status" value="1"/>
</dbReference>
<dbReference type="SMART" id="SM01382">
    <property type="entry name" value="Ribosomal_L2_C"/>
    <property type="match status" value="1"/>
</dbReference>
<dbReference type="SUPFAM" id="SSF50249">
    <property type="entry name" value="Nucleic acid-binding proteins"/>
    <property type="match status" value="1"/>
</dbReference>
<dbReference type="SUPFAM" id="SSF50104">
    <property type="entry name" value="Translation proteins SH3-like domain"/>
    <property type="match status" value="1"/>
</dbReference>
<protein>
    <recommendedName>
        <fullName evidence="1">Large ribosomal subunit protein uL2</fullName>
    </recommendedName>
    <alternativeName>
        <fullName evidence="3">50S ribosomal protein L2</fullName>
    </alternativeName>
</protein>
<feature type="chain" id="PRO_0000129643" description="Large ribosomal subunit protein uL2">
    <location>
        <begin position="1"/>
        <end position="273"/>
    </location>
</feature>
<feature type="region of interest" description="Disordered" evidence="2">
    <location>
        <begin position="28"/>
        <end position="55"/>
    </location>
</feature>
<feature type="region of interest" description="Disordered" evidence="2">
    <location>
        <begin position="222"/>
        <end position="273"/>
    </location>
</feature>
<feature type="compositionally biased region" description="Basic residues" evidence="2">
    <location>
        <begin position="255"/>
        <end position="273"/>
    </location>
</feature>
<comment type="function">
    <text evidence="1">One of the primary rRNA binding proteins. Required for association of the 30S and 50S subunits to form the 70S ribosome, for tRNA binding and peptide bond formation. It has been suggested to have peptidyltransferase activity; this is somewhat controversial. Makes several contacts with the 16S rRNA in the 70S ribosome.</text>
</comment>
<comment type="subunit">
    <text evidence="1">Part of the 50S ribosomal subunit. Forms a bridge to the 30S subunit in the 70S ribosome.</text>
</comment>
<comment type="similarity">
    <text evidence="1">Belongs to the universal ribosomal protein uL2 family.</text>
</comment>
<name>RL2_TREPA</name>
<evidence type="ECO:0000255" key="1">
    <source>
        <dbReference type="HAMAP-Rule" id="MF_01320"/>
    </source>
</evidence>
<evidence type="ECO:0000256" key="2">
    <source>
        <dbReference type="SAM" id="MobiDB-lite"/>
    </source>
</evidence>
<evidence type="ECO:0000305" key="3"/>
<proteinExistence type="inferred from homology"/>
<keyword id="KW-1185">Reference proteome</keyword>
<keyword id="KW-0687">Ribonucleoprotein</keyword>
<keyword id="KW-0689">Ribosomal protein</keyword>
<keyword id="KW-0694">RNA-binding</keyword>
<keyword id="KW-0699">rRNA-binding</keyword>